<protein>
    <recommendedName>
        <fullName evidence="1">Ribosomal protein L11 methyltransferase</fullName>
        <shortName evidence="1">L11 Mtase</shortName>
        <ecNumber evidence="1">2.1.1.-</ecNumber>
    </recommendedName>
</protein>
<keyword id="KW-0963">Cytoplasm</keyword>
<keyword id="KW-0489">Methyltransferase</keyword>
<keyword id="KW-0949">S-adenosyl-L-methionine</keyword>
<keyword id="KW-0808">Transferase</keyword>
<gene>
    <name evidence="1" type="primary">prmA</name>
    <name type="ordered locus">BCB4264_A4431</name>
</gene>
<reference key="1">
    <citation type="submission" date="2008-10" db="EMBL/GenBank/DDBJ databases">
        <title>Genome sequence of Bacillus cereus B4264.</title>
        <authorList>
            <person name="Dodson R.J."/>
            <person name="Durkin A.S."/>
            <person name="Rosovitz M.J."/>
            <person name="Rasko D.A."/>
            <person name="Hoffmaster A."/>
            <person name="Ravel J."/>
            <person name="Sutton G."/>
        </authorList>
    </citation>
    <scope>NUCLEOTIDE SEQUENCE [LARGE SCALE GENOMIC DNA]</scope>
    <source>
        <strain>B4264</strain>
    </source>
</reference>
<comment type="function">
    <text evidence="1">Methylates ribosomal protein L11.</text>
</comment>
<comment type="catalytic activity">
    <reaction evidence="1">
        <text>L-lysyl-[protein] + 3 S-adenosyl-L-methionine = N(6),N(6),N(6)-trimethyl-L-lysyl-[protein] + 3 S-adenosyl-L-homocysteine + 3 H(+)</text>
        <dbReference type="Rhea" id="RHEA:54192"/>
        <dbReference type="Rhea" id="RHEA-COMP:9752"/>
        <dbReference type="Rhea" id="RHEA-COMP:13826"/>
        <dbReference type="ChEBI" id="CHEBI:15378"/>
        <dbReference type="ChEBI" id="CHEBI:29969"/>
        <dbReference type="ChEBI" id="CHEBI:57856"/>
        <dbReference type="ChEBI" id="CHEBI:59789"/>
        <dbReference type="ChEBI" id="CHEBI:61961"/>
    </reaction>
</comment>
<comment type="subcellular location">
    <subcellularLocation>
        <location evidence="1">Cytoplasm</location>
    </subcellularLocation>
</comment>
<comment type="similarity">
    <text evidence="1">Belongs to the methyltransferase superfamily. PrmA family.</text>
</comment>
<organism>
    <name type="scientific">Bacillus cereus (strain B4264)</name>
    <dbReference type="NCBI Taxonomy" id="405532"/>
    <lineage>
        <taxon>Bacteria</taxon>
        <taxon>Bacillati</taxon>
        <taxon>Bacillota</taxon>
        <taxon>Bacilli</taxon>
        <taxon>Bacillales</taxon>
        <taxon>Bacillaceae</taxon>
        <taxon>Bacillus</taxon>
        <taxon>Bacillus cereus group</taxon>
    </lineage>
</organism>
<sequence length="312" mass="33728">MKWSEISIHTTEEAVEAVSHILHEAGASGVAIEDPAELTKEREQQYGEIYALNPDEYPAEGVLIKAYFPQTDSLHETIAGVKSSIDVLPSYDIEIGTGNITVNEVNEEDWATAWKKYYHPVQISDTFTIVPTWEEYTPSSPDEKIIELDPGMAFGTGTHPTTTMCIRALEKTVQPGDNIIDVGTGSGVLSIAAAKLGASSVQAYDLDPVAVESAEMNVRLNKTDDIVSVGQNSLLEGIEGPVDLIVANLLAEIILLFPEDAARVVKSGGLFITSGIIAAKEKVISEALEKAGFTIEEVLRMEDWVAIIARNA</sequence>
<proteinExistence type="inferred from homology"/>
<feature type="chain" id="PRO_1000192582" description="Ribosomal protein L11 methyltransferase">
    <location>
        <begin position="1"/>
        <end position="312"/>
    </location>
</feature>
<feature type="binding site" evidence="1">
    <location>
        <position position="162"/>
    </location>
    <ligand>
        <name>S-adenosyl-L-methionine</name>
        <dbReference type="ChEBI" id="CHEBI:59789"/>
    </ligand>
</feature>
<feature type="binding site" evidence="1">
    <location>
        <position position="183"/>
    </location>
    <ligand>
        <name>S-adenosyl-L-methionine</name>
        <dbReference type="ChEBI" id="CHEBI:59789"/>
    </ligand>
</feature>
<feature type="binding site" evidence="1">
    <location>
        <position position="205"/>
    </location>
    <ligand>
        <name>S-adenosyl-L-methionine</name>
        <dbReference type="ChEBI" id="CHEBI:59789"/>
    </ligand>
</feature>
<feature type="binding site" evidence="1">
    <location>
        <position position="248"/>
    </location>
    <ligand>
        <name>S-adenosyl-L-methionine</name>
        <dbReference type="ChEBI" id="CHEBI:59789"/>
    </ligand>
</feature>
<evidence type="ECO:0000255" key="1">
    <source>
        <dbReference type="HAMAP-Rule" id="MF_00735"/>
    </source>
</evidence>
<name>PRMA_BACC4</name>
<accession>B7HCT8</accession>
<dbReference type="EC" id="2.1.1.-" evidence="1"/>
<dbReference type="EMBL" id="CP001176">
    <property type="protein sequence ID" value="ACK58758.1"/>
    <property type="molecule type" value="Genomic_DNA"/>
</dbReference>
<dbReference type="RefSeq" id="WP_000872101.1">
    <property type="nucleotide sequence ID" value="NZ_VEHB01000006.1"/>
</dbReference>
<dbReference type="SMR" id="B7HCT8"/>
<dbReference type="KEGG" id="bcb:BCB4264_A4431"/>
<dbReference type="HOGENOM" id="CLU_049382_0_1_9"/>
<dbReference type="Proteomes" id="UP000007096">
    <property type="component" value="Chromosome"/>
</dbReference>
<dbReference type="GO" id="GO:0005737">
    <property type="term" value="C:cytoplasm"/>
    <property type="evidence" value="ECO:0007669"/>
    <property type="project" value="UniProtKB-SubCell"/>
</dbReference>
<dbReference type="GO" id="GO:0016279">
    <property type="term" value="F:protein-lysine N-methyltransferase activity"/>
    <property type="evidence" value="ECO:0007669"/>
    <property type="project" value="RHEA"/>
</dbReference>
<dbReference type="GO" id="GO:0032259">
    <property type="term" value="P:methylation"/>
    <property type="evidence" value="ECO:0007669"/>
    <property type="project" value="UniProtKB-KW"/>
</dbReference>
<dbReference type="CDD" id="cd02440">
    <property type="entry name" value="AdoMet_MTases"/>
    <property type="match status" value="1"/>
</dbReference>
<dbReference type="Gene3D" id="3.40.50.150">
    <property type="entry name" value="Vaccinia Virus protein VP39"/>
    <property type="match status" value="1"/>
</dbReference>
<dbReference type="HAMAP" id="MF_00735">
    <property type="entry name" value="Methyltr_PrmA"/>
    <property type="match status" value="1"/>
</dbReference>
<dbReference type="InterPro" id="IPR050078">
    <property type="entry name" value="Ribosomal_L11_MeTrfase_PrmA"/>
</dbReference>
<dbReference type="InterPro" id="IPR004498">
    <property type="entry name" value="Ribosomal_PrmA_MeTrfase"/>
</dbReference>
<dbReference type="InterPro" id="IPR029063">
    <property type="entry name" value="SAM-dependent_MTases_sf"/>
</dbReference>
<dbReference type="NCBIfam" id="TIGR00406">
    <property type="entry name" value="prmA"/>
    <property type="match status" value="1"/>
</dbReference>
<dbReference type="PANTHER" id="PTHR43648">
    <property type="entry name" value="ELECTRON TRANSFER FLAVOPROTEIN BETA SUBUNIT LYSINE METHYLTRANSFERASE"/>
    <property type="match status" value="1"/>
</dbReference>
<dbReference type="PANTHER" id="PTHR43648:SF1">
    <property type="entry name" value="ELECTRON TRANSFER FLAVOPROTEIN BETA SUBUNIT LYSINE METHYLTRANSFERASE"/>
    <property type="match status" value="1"/>
</dbReference>
<dbReference type="Pfam" id="PF06325">
    <property type="entry name" value="PrmA"/>
    <property type="match status" value="1"/>
</dbReference>
<dbReference type="PIRSF" id="PIRSF000401">
    <property type="entry name" value="RPL11_MTase"/>
    <property type="match status" value="1"/>
</dbReference>
<dbReference type="SUPFAM" id="SSF53335">
    <property type="entry name" value="S-adenosyl-L-methionine-dependent methyltransferases"/>
    <property type="match status" value="1"/>
</dbReference>